<comment type="function">
    <text evidence="1">Acts as a co-chaperone with HSPA8/Hsc70; required to promote protein folding and trafficking, prevent aggregation of client proteins, and promote unfolded proteins to endoplasmic reticulum-associated degradation (ERAD) pathway. Acts by determining hspa8/Hsc70's ATPase and polypeptide-binding activities. Can also act independently of hspa8/Hsc70: together with dnajb12, acts as a chaperone that promotes maturation of potassium channels by stabilizing nascent channel subunits and assembling them into tetramers. While stabilization of nascent channel proteins is dependent on hspa8/Hsc70, the process of oligomerization of channel subunits is independent of hspa8/Hsc70.</text>
</comment>
<comment type="subcellular location">
    <subcellularLocation>
        <location evidence="1">Endoplasmic reticulum membrane</location>
        <topology evidence="2">Single-pass membrane protein</topology>
    </subcellularLocation>
</comment>
<comment type="similarity">
    <text evidence="5">Belongs to the DnaJ family. DNAJB12/DNAJB14 subfamily.</text>
</comment>
<reference key="1">
    <citation type="submission" date="2003-01" db="EMBL/GenBank/DDBJ databases">
        <authorList>
            <consortium name="NIH - Xenopus Gene Collection (XGC) project"/>
        </authorList>
    </citation>
    <scope>NUCLEOTIDE SEQUENCE [LARGE SCALE MRNA]</scope>
    <source>
        <tissue>Embryo</tissue>
    </source>
</reference>
<accession>Q7ZXQ8</accession>
<sequence>MESNRDEAERCVRIGKAAIEAGDKEKARRFFSKAERLYPSSEARVLLDALEKNDTAGNGPQSEKMSKSTEQPKAEKDSSGDTGKGHTQDQVDGVQRIKKCKTYYEVLGVSPDAGEEDLKKAYRKLALKFHPDKNHAPGATEAFKKIGNAYAVLSNPEKRKQYDLTGSEDNVQNNHRNGGFDYHRGFEADITPEDLFNMFFGGGFPSGSVHTFSNGRTRYSHHQHHHHSGHDREEERADGGFSMFIQLMPIIVLILVSLLSQLMVSNPPYSLYPRSGQTIKRVTENLQISYYVSKDFKSEYNGMLLQKLEKNIEEDYVANVRNNCWRERQQKQDLLHAAKVYRDERLRMKAESISMENCKELNRLTSLFRGG</sequence>
<name>DJB14_XENLA</name>
<evidence type="ECO:0000250" key="1">
    <source>
        <dbReference type="UniProtKB" id="Q8TBM8"/>
    </source>
</evidence>
<evidence type="ECO:0000255" key="2"/>
<evidence type="ECO:0000255" key="3">
    <source>
        <dbReference type="PROSITE-ProRule" id="PRU00286"/>
    </source>
</evidence>
<evidence type="ECO:0000256" key="4">
    <source>
        <dbReference type="SAM" id="MobiDB-lite"/>
    </source>
</evidence>
<evidence type="ECO:0000305" key="5"/>
<gene>
    <name type="primary">dnajb14</name>
</gene>
<keyword id="KW-0143">Chaperone</keyword>
<keyword id="KW-0256">Endoplasmic reticulum</keyword>
<keyword id="KW-0472">Membrane</keyword>
<keyword id="KW-1185">Reference proteome</keyword>
<keyword id="KW-0802">TPR repeat</keyword>
<keyword id="KW-0812">Transmembrane</keyword>
<keyword id="KW-1133">Transmembrane helix</keyword>
<proteinExistence type="evidence at transcript level"/>
<protein>
    <recommendedName>
        <fullName>DnaJ homolog subfamily B member 14</fullName>
    </recommendedName>
</protein>
<feature type="chain" id="PRO_0000281481" description="DnaJ homolog subfamily B member 14">
    <location>
        <begin position="1"/>
        <end position="371"/>
    </location>
</feature>
<feature type="topological domain" description="Cytoplasmic" evidence="2">
    <location>
        <begin position="1"/>
        <end position="238"/>
    </location>
</feature>
<feature type="transmembrane region" description="Helical" evidence="2">
    <location>
        <begin position="239"/>
        <end position="259"/>
    </location>
</feature>
<feature type="topological domain" description="Lumenal" evidence="2">
    <location>
        <begin position="260"/>
        <end position="371"/>
    </location>
</feature>
<feature type="repeat" description="TPR">
    <location>
        <begin position="8"/>
        <end position="41"/>
    </location>
</feature>
<feature type="domain" description="J" evidence="3">
    <location>
        <begin position="102"/>
        <end position="166"/>
    </location>
</feature>
<feature type="region of interest" description="Disordered" evidence="4">
    <location>
        <begin position="48"/>
        <end position="92"/>
    </location>
</feature>
<feature type="region of interest" description="Disordered" evidence="4">
    <location>
        <begin position="215"/>
        <end position="235"/>
    </location>
</feature>
<feature type="compositionally biased region" description="Basic and acidic residues" evidence="4">
    <location>
        <begin position="64"/>
        <end position="89"/>
    </location>
</feature>
<feature type="compositionally biased region" description="Basic residues" evidence="4">
    <location>
        <begin position="218"/>
        <end position="229"/>
    </location>
</feature>
<dbReference type="EMBL" id="BC044298">
    <property type="protein sequence ID" value="AAH44298.1"/>
    <property type="molecule type" value="mRNA"/>
</dbReference>
<dbReference type="RefSeq" id="NP_001080644.1">
    <property type="nucleotide sequence ID" value="NM_001087175.1"/>
</dbReference>
<dbReference type="SMR" id="Q7ZXQ8"/>
<dbReference type="DNASU" id="380336"/>
<dbReference type="GeneID" id="380336"/>
<dbReference type="KEGG" id="xla:380336"/>
<dbReference type="AGR" id="Xenbase:XB-GENE-952318"/>
<dbReference type="CTD" id="380336"/>
<dbReference type="Xenbase" id="XB-GENE-952318">
    <property type="gene designation" value="dnajb14.S"/>
</dbReference>
<dbReference type="OMA" id="DDRMRKK"/>
<dbReference type="OrthoDB" id="442087at2759"/>
<dbReference type="Proteomes" id="UP000186698">
    <property type="component" value="Chromosome 1S"/>
</dbReference>
<dbReference type="Bgee" id="380336">
    <property type="expression patterns" value="Expressed in blastula and 19 other cell types or tissues"/>
</dbReference>
<dbReference type="GO" id="GO:0005783">
    <property type="term" value="C:endoplasmic reticulum"/>
    <property type="evidence" value="ECO:0000250"/>
    <property type="project" value="UniProtKB"/>
</dbReference>
<dbReference type="GO" id="GO:0005789">
    <property type="term" value="C:endoplasmic reticulum membrane"/>
    <property type="evidence" value="ECO:0000318"/>
    <property type="project" value="GO_Central"/>
</dbReference>
<dbReference type="GO" id="GO:0030544">
    <property type="term" value="F:Hsp70 protein binding"/>
    <property type="evidence" value="ECO:0000318"/>
    <property type="project" value="GO_Central"/>
</dbReference>
<dbReference type="GO" id="GO:0071218">
    <property type="term" value="P:cellular response to misfolded protein"/>
    <property type="evidence" value="ECO:0000318"/>
    <property type="project" value="GO_Central"/>
</dbReference>
<dbReference type="GO" id="GO:0051085">
    <property type="term" value="P:chaperone cofactor-dependent protein refolding"/>
    <property type="evidence" value="ECO:0000250"/>
    <property type="project" value="UniProtKB"/>
</dbReference>
<dbReference type="GO" id="GO:0065003">
    <property type="term" value="P:protein-containing complex assembly"/>
    <property type="evidence" value="ECO:0000250"/>
    <property type="project" value="UniProtKB"/>
</dbReference>
<dbReference type="CDD" id="cd06257">
    <property type="entry name" value="DnaJ"/>
    <property type="match status" value="1"/>
</dbReference>
<dbReference type="FunFam" id="1.10.287.110:FF:000004">
    <property type="entry name" value="DnaJ (Hsp40) homolog, subfamily B, member 14"/>
    <property type="match status" value="1"/>
</dbReference>
<dbReference type="Gene3D" id="1.10.287.110">
    <property type="entry name" value="DnaJ domain"/>
    <property type="match status" value="1"/>
</dbReference>
<dbReference type="InterPro" id="IPR001623">
    <property type="entry name" value="DnaJ_domain"/>
</dbReference>
<dbReference type="InterPro" id="IPR018253">
    <property type="entry name" value="DnaJ_domain_CS"/>
</dbReference>
<dbReference type="InterPro" id="IPR051100">
    <property type="entry name" value="DnaJ_subfamily_B/C"/>
</dbReference>
<dbReference type="InterPro" id="IPR015399">
    <property type="entry name" value="DUF1977_DnaJ-like"/>
</dbReference>
<dbReference type="InterPro" id="IPR036869">
    <property type="entry name" value="J_dom_sf"/>
</dbReference>
<dbReference type="InterPro" id="IPR019734">
    <property type="entry name" value="TPR_rpt"/>
</dbReference>
<dbReference type="PANTHER" id="PTHR43908">
    <property type="entry name" value="AT29763P-RELATED"/>
    <property type="match status" value="1"/>
</dbReference>
<dbReference type="PANTHER" id="PTHR43908:SF4">
    <property type="entry name" value="DNAJ HOMOLOG SUBFAMILY B MEMBER 14"/>
    <property type="match status" value="1"/>
</dbReference>
<dbReference type="Pfam" id="PF00226">
    <property type="entry name" value="DnaJ"/>
    <property type="match status" value="1"/>
</dbReference>
<dbReference type="Pfam" id="PF09320">
    <property type="entry name" value="DUF1977"/>
    <property type="match status" value="1"/>
</dbReference>
<dbReference type="PRINTS" id="PR00625">
    <property type="entry name" value="JDOMAIN"/>
</dbReference>
<dbReference type="SMART" id="SM00271">
    <property type="entry name" value="DnaJ"/>
    <property type="match status" value="1"/>
</dbReference>
<dbReference type="SUPFAM" id="SSF46565">
    <property type="entry name" value="Chaperone J-domain"/>
    <property type="match status" value="1"/>
</dbReference>
<dbReference type="PROSITE" id="PS00636">
    <property type="entry name" value="DNAJ_1"/>
    <property type="match status" value="1"/>
</dbReference>
<dbReference type="PROSITE" id="PS50076">
    <property type="entry name" value="DNAJ_2"/>
    <property type="match status" value="1"/>
</dbReference>
<dbReference type="PROSITE" id="PS50005">
    <property type="entry name" value="TPR"/>
    <property type="match status" value="1"/>
</dbReference>
<dbReference type="PROSITE" id="PS50293">
    <property type="entry name" value="TPR_REGION"/>
    <property type="match status" value="1"/>
</dbReference>
<organism>
    <name type="scientific">Xenopus laevis</name>
    <name type="common">African clawed frog</name>
    <dbReference type="NCBI Taxonomy" id="8355"/>
    <lineage>
        <taxon>Eukaryota</taxon>
        <taxon>Metazoa</taxon>
        <taxon>Chordata</taxon>
        <taxon>Craniata</taxon>
        <taxon>Vertebrata</taxon>
        <taxon>Euteleostomi</taxon>
        <taxon>Amphibia</taxon>
        <taxon>Batrachia</taxon>
        <taxon>Anura</taxon>
        <taxon>Pipoidea</taxon>
        <taxon>Pipidae</taxon>
        <taxon>Xenopodinae</taxon>
        <taxon>Xenopus</taxon>
        <taxon>Xenopus</taxon>
    </lineage>
</organism>